<protein>
    <recommendedName>
        <fullName>Biglycan</fullName>
    </recommendedName>
    <alternativeName>
        <fullName>Bone/cartilage proteoglycan I</fullName>
    </alternativeName>
    <alternativeName>
        <fullName>PG-S1</fullName>
    </alternativeName>
</protein>
<name>PGS1_RABIT</name>
<reference key="1">
    <citation type="journal article" date="1998" name="Matrix Biol.">
        <title>Altered levels of extracellular matrix molecules mRNA in healing rabbit ligaments.</title>
        <authorList>
            <person name="Boykiw R.H."/>
            <person name="Sciore P."/>
            <person name="Reno C.R."/>
            <person name="Marchuk L."/>
            <person name="Frank C."/>
            <person name="Hart D.A."/>
        </authorList>
    </citation>
    <scope>NUCLEOTIDE SEQUENCE [MRNA]</scope>
    <source>
        <strain>New Zealand white</strain>
    </source>
</reference>
<dbReference type="EMBL" id="AF020290">
    <property type="protein sequence ID" value="AAC39515.1"/>
    <property type="molecule type" value="mRNA"/>
</dbReference>
<dbReference type="SMR" id="O46377"/>
<dbReference type="STRING" id="9986.ENSOCUP00000026470"/>
<dbReference type="GlyCosmos" id="O46377">
    <property type="glycosylation" value="2 sites, No reported glycans"/>
</dbReference>
<dbReference type="PaxDb" id="9986-ENSOCUP00000026470"/>
<dbReference type="eggNOG" id="KOG0619">
    <property type="taxonomic scope" value="Eukaryota"/>
</dbReference>
<dbReference type="InParanoid" id="O46377"/>
<dbReference type="Proteomes" id="UP000001811">
    <property type="component" value="Unplaced"/>
</dbReference>
<dbReference type="GO" id="GO:0005615">
    <property type="term" value="C:extracellular space"/>
    <property type="evidence" value="ECO:0007669"/>
    <property type="project" value="TreeGrafter"/>
</dbReference>
<dbReference type="Gene3D" id="3.80.10.10">
    <property type="entry name" value="Ribonuclease Inhibitor"/>
    <property type="match status" value="1"/>
</dbReference>
<dbReference type="InterPro" id="IPR001611">
    <property type="entry name" value="Leu-rich_rpt"/>
</dbReference>
<dbReference type="InterPro" id="IPR003591">
    <property type="entry name" value="Leu-rich_rpt_typical-subtyp"/>
</dbReference>
<dbReference type="InterPro" id="IPR032675">
    <property type="entry name" value="LRR_dom_sf"/>
</dbReference>
<dbReference type="InterPro" id="IPR050333">
    <property type="entry name" value="SLRP"/>
</dbReference>
<dbReference type="PANTHER" id="PTHR45712">
    <property type="entry name" value="AGAP008170-PA"/>
    <property type="match status" value="1"/>
</dbReference>
<dbReference type="PANTHER" id="PTHR45712:SF11">
    <property type="entry name" value="BIGLYCAN"/>
    <property type="match status" value="1"/>
</dbReference>
<dbReference type="Pfam" id="PF13855">
    <property type="entry name" value="LRR_8"/>
    <property type="match status" value="1"/>
</dbReference>
<dbReference type="SMART" id="SM00369">
    <property type="entry name" value="LRR_TYP"/>
    <property type="match status" value="4"/>
</dbReference>
<dbReference type="SUPFAM" id="SSF52058">
    <property type="entry name" value="L domain-like"/>
    <property type="match status" value="1"/>
</dbReference>
<dbReference type="PROSITE" id="PS51450">
    <property type="entry name" value="LRR"/>
    <property type="match status" value="4"/>
</dbReference>
<accession>O46377</accession>
<gene>
    <name type="primary">BGN</name>
</gene>
<comment type="function">
    <text evidence="1">May be involved in collagen fiber assembly.</text>
</comment>
<comment type="subunit">
    <text evidence="1">Homodimer. Forms a ternary complex with MFAP2 and ELN (By similarity).</text>
</comment>
<comment type="subcellular location">
    <subcellularLocation>
        <location evidence="1">Secreted</location>
        <location evidence="1">Extracellular space</location>
        <location evidence="1">Extracellular matrix</location>
    </subcellularLocation>
</comment>
<comment type="tissue specificity">
    <text>Found in several connective tissues, especially in articular cartilages.</text>
</comment>
<comment type="PTM">
    <text evidence="1">The two attached glycosaminoglycan chains can be either chondroitin sulfate or dermatan sulfate.</text>
</comment>
<comment type="similarity">
    <text evidence="3">Belongs to the small leucine-rich proteoglycan (SLRP) family. SLRP class I subfamily.</text>
</comment>
<proteinExistence type="evidence at transcript level"/>
<sequence>DGLKLNYLRISEAKLTGIPKDLPETLNELHLDHNKIQAIELEDLLRYSKLYRLGLGHNQIRMIENGSLSFLPTLRELHLDNNKLSRVPAGLPDLKLLQVVYLHSNNITKVGVNDFCPVGFGVKRAYYNGISLFNN</sequence>
<evidence type="ECO:0000250" key="1"/>
<evidence type="ECO:0000255" key="2"/>
<evidence type="ECO:0000305" key="3"/>
<feature type="chain" id="PRO_0000180083" description="Biglycan">
    <location>
        <begin position="1" status="less than"/>
        <end position="135" status="greater than"/>
    </location>
</feature>
<feature type="repeat" description="LRR 1">
    <location>
        <begin position="4"/>
        <end position="24"/>
    </location>
</feature>
<feature type="repeat" description="LRR 2">
    <location>
        <begin position="25"/>
        <end position="46"/>
    </location>
</feature>
<feature type="repeat" description="LRR 3">
    <location>
        <begin position="49"/>
        <end position="72"/>
    </location>
</feature>
<feature type="repeat" description="LRR 4">
    <location>
        <begin position="73"/>
        <end position="95"/>
    </location>
</feature>
<feature type="repeat" description="LRR 5">
    <location>
        <begin position="96"/>
        <end position="117"/>
    </location>
</feature>
<feature type="glycosylation site" description="N-linked (GlcNAc...) asparagine" evidence="2">
    <location>
        <position position="65"/>
    </location>
</feature>
<feature type="glycosylation site" description="N-linked (GlcNAc...) asparagine" evidence="2">
    <location>
        <position position="106"/>
    </location>
</feature>
<feature type="non-terminal residue">
    <location>
        <position position="1"/>
    </location>
</feature>
<feature type="non-terminal residue">
    <location>
        <position position="135"/>
    </location>
</feature>
<organism>
    <name type="scientific">Oryctolagus cuniculus</name>
    <name type="common">Rabbit</name>
    <dbReference type="NCBI Taxonomy" id="9986"/>
    <lineage>
        <taxon>Eukaryota</taxon>
        <taxon>Metazoa</taxon>
        <taxon>Chordata</taxon>
        <taxon>Craniata</taxon>
        <taxon>Vertebrata</taxon>
        <taxon>Euteleostomi</taxon>
        <taxon>Mammalia</taxon>
        <taxon>Eutheria</taxon>
        <taxon>Euarchontoglires</taxon>
        <taxon>Glires</taxon>
        <taxon>Lagomorpha</taxon>
        <taxon>Leporidae</taxon>
        <taxon>Oryctolagus</taxon>
    </lineage>
</organism>
<keyword id="KW-0272">Extracellular matrix</keyword>
<keyword id="KW-0325">Glycoprotein</keyword>
<keyword id="KW-0433">Leucine-rich repeat</keyword>
<keyword id="KW-0654">Proteoglycan</keyword>
<keyword id="KW-1185">Reference proteome</keyword>
<keyword id="KW-0677">Repeat</keyword>
<keyword id="KW-0964">Secreted</keyword>